<proteinExistence type="inferred from homology"/>
<accession>A7TEU3</accession>
<sequence length="252" mass="27932">MSLPATFDLTPEDAQLLLAANTHLGARNVQVHQEPYVFNTRPDGVNVINVGKTWEKIVLAARIIAAIPNPEDVCAISSRTYGQRAVLKFSAHTGATPIAGRFTPGSFTNYITRSFKEPRLIIVTDPRSDFQAIKEASYVNIPVIALTDLDSPSEYVDVAIPCNNRGKHSIGLVWYLLAREVLRLRGALVDRTQPWAIMPDLYFYRNPEEVEQQAAEETTSTGADAEESKEEVAEGQNEASEWAEENTEAVSW</sequence>
<dbReference type="EMBL" id="DS480381">
    <property type="protein sequence ID" value="EDO19189.1"/>
    <property type="molecule type" value="Genomic_DNA"/>
</dbReference>
<dbReference type="RefSeq" id="XP_001647047.1">
    <property type="nucleotide sequence ID" value="XM_001646997.1"/>
</dbReference>
<dbReference type="SMR" id="A7TEU3"/>
<dbReference type="FunCoup" id="A7TEU3">
    <property type="interactions" value="1436"/>
</dbReference>
<dbReference type="STRING" id="436907.A7TEU3"/>
<dbReference type="GeneID" id="5547520"/>
<dbReference type="KEGG" id="vpo:Kpol_1050p46"/>
<dbReference type="eggNOG" id="KOG0830">
    <property type="taxonomic scope" value="Eukaryota"/>
</dbReference>
<dbReference type="HOGENOM" id="CLU_058171_2_0_1"/>
<dbReference type="InParanoid" id="A7TEU3"/>
<dbReference type="OMA" id="VKNFFEP"/>
<dbReference type="OrthoDB" id="414863at2759"/>
<dbReference type="PhylomeDB" id="A7TEU3"/>
<dbReference type="Proteomes" id="UP000000267">
    <property type="component" value="Unassembled WGS sequence"/>
</dbReference>
<dbReference type="GO" id="GO:0022627">
    <property type="term" value="C:cytosolic small ribosomal subunit"/>
    <property type="evidence" value="ECO:0007669"/>
    <property type="project" value="UniProtKB-UniRule"/>
</dbReference>
<dbReference type="GO" id="GO:0003735">
    <property type="term" value="F:structural constituent of ribosome"/>
    <property type="evidence" value="ECO:0007669"/>
    <property type="project" value="UniProtKB-UniRule"/>
</dbReference>
<dbReference type="GO" id="GO:0000028">
    <property type="term" value="P:ribosomal small subunit assembly"/>
    <property type="evidence" value="ECO:0007669"/>
    <property type="project" value="UniProtKB-UniRule"/>
</dbReference>
<dbReference type="GO" id="GO:0006412">
    <property type="term" value="P:translation"/>
    <property type="evidence" value="ECO:0007669"/>
    <property type="project" value="UniProtKB-UniRule"/>
</dbReference>
<dbReference type="CDD" id="cd01425">
    <property type="entry name" value="RPS2"/>
    <property type="match status" value="1"/>
</dbReference>
<dbReference type="FunFam" id="3.40.50.10490:FF:000010">
    <property type="entry name" value="40S ribosomal protein S0"/>
    <property type="match status" value="1"/>
</dbReference>
<dbReference type="Gene3D" id="3.40.50.10490">
    <property type="entry name" value="Glucose-6-phosphate isomerase like protein, domain 1"/>
    <property type="match status" value="1"/>
</dbReference>
<dbReference type="HAMAP" id="MF_03015">
    <property type="entry name" value="Ribosomal_S2_euk"/>
    <property type="match status" value="1"/>
</dbReference>
<dbReference type="InterPro" id="IPR001865">
    <property type="entry name" value="Ribosomal_uS2"/>
</dbReference>
<dbReference type="InterPro" id="IPR018130">
    <property type="entry name" value="Ribosomal_uS2_CS"/>
</dbReference>
<dbReference type="InterPro" id="IPR027498">
    <property type="entry name" value="Ribosomal_uS2_euk"/>
</dbReference>
<dbReference type="InterPro" id="IPR005707">
    <property type="entry name" value="Ribosomal_uS2_euk/arc"/>
</dbReference>
<dbReference type="InterPro" id="IPR023591">
    <property type="entry name" value="Ribosomal_uS2_flav_dom_sf"/>
</dbReference>
<dbReference type="NCBIfam" id="TIGR01012">
    <property type="entry name" value="uS2_euk_arch"/>
    <property type="match status" value="1"/>
</dbReference>
<dbReference type="PANTHER" id="PTHR11489">
    <property type="entry name" value="40S RIBOSOMAL PROTEIN SA"/>
    <property type="match status" value="1"/>
</dbReference>
<dbReference type="Pfam" id="PF00318">
    <property type="entry name" value="Ribosomal_S2"/>
    <property type="match status" value="2"/>
</dbReference>
<dbReference type="PRINTS" id="PR00395">
    <property type="entry name" value="RIBOSOMALS2"/>
</dbReference>
<dbReference type="SUPFAM" id="SSF52313">
    <property type="entry name" value="Ribosomal protein S2"/>
    <property type="match status" value="1"/>
</dbReference>
<dbReference type="PROSITE" id="PS00962">
    <property type="entry name" value="RIBOSOMAL_S2_1"/>
    <property type="match status" value="1"/>
</dbReference>
<dbReference type="PROSITE" id="PS00963">
    <property type="entry name" value="RIBOSOMAL_S2_2"/>
    <property type="match status" value="1"/>
</dbReference>
<organism>
    <name type="scientific">Vanderwaltozyma polyspora (strain ATCC 22028 / DSM 70294 / BCRC 21397 / CBS 2163 / NBRC 10782 / NRRL Y-8283 / UCD 57-17)</name>
    <name type="common">Kluyveromyces polysporus</name>
    <dbReference type="NCBI Taxonomy" id="436907"/>
    <lineage>
        <taxon>Eukaryota</taxon>
        <taxon>Fungi</taxon>
        <taxon>Dikarya</taxon>
        <taxon>Ascomycota</taxon>
        <taxon>Saccharomycotina</taxon>
        <taxon>Saccharomycetes</taxon>
        <taxon>Saccharomycetales</taxon>
        <taxon>Saccharomycetaceae</taxon>
        <taxon>Vanderwaltozyma</taxon>
    </lineage>
</organism>
<protein>
    <recommendedName>
        <fullName evidence="1">Small ribosomal subunit protein uS2A</fullName>
    </recommendedName>
    <alternativeName>
        <fullName>40S ribosomal protein S0-A</fullName>
    </alternativeName>
</protein>
<reference key="1">
    <citation type="journal article" date="2007" name="Proc. Natl. Acad. Sci. U.S.A.">
        <title>Independent sorting-out of thousands of duplicated gene pairs in two yeast species descended from a whole-genome duplication.</title>
        <authorList>
            <person name="Scannell D.R."/>
            <person name="Frank A.C."/>
            <person name="Conant G.C."/>
            <person name="Byrne K.P."/>
            <person name="Woolfit M."/>
            <person name="Wolfe K.H."/>
        </authorList>
    </citation>
    <scope>NUCLEOTIDE SEQUENCE [LARGE SCALE GENOMIC DNA]</scope>
    <source>
        <strain>ATCC 22028 / DSM 70294 / BCRC 21397 / CBS 2163 / NBRC 10782 / NRRL Y-8283 / UCD 57-17</strain>
    </source>
</reference>
<evidence type="ECO:0000255" key="1">
    <source>
        <dbReference type="HAMAP-Rule" id="MF_03015"/>
    </source>
</evidence>
<evidence type="ECO:0000256" key="2">
    <source>
        <dbReference type="SAM" id="MobiDB-lite"/>
    </source>
</evidence>
<feature type="initiator methionine" description="Removed" evidence="1">
    <location>
        <position position="1"/>
    </location>
</feature>
<feature type="chain" id="PRO_0000371651" description="Small ribosomal subunit protein uS2A">
    <location>
        <begin position="2"/>
        <end position="252"/>
    </location>
</feature>
<feature type="region of interest" description="Disordered" evidence="2">
    <location>
        <begin position="209"/>
        <end position="252"/>
    </location>
</feature>
<feature type="compositionally biased region" description="Acidic residues" evidence="2">
    <location>
        <begin position="241"/>
        <end position="252"/>
    </location>
</feature>
<feature type="modified residue" description="N-acetylserine" evidence="1">
    <location>
        <position position="2"/>
    </location>
</feature>
<keyword id="KW-0007">Acetylation</keyword>
<keyword id="KW-0963">Cytoplasm</keyword>
<keyword id="KW-1185">Reference proteome</keyword>
<keyword id="KW-0687">Ribonucleoprotein</keyword>
<keyword id="KW-0689">Ribosomal protein</keyword>
<name>RSSA1_VANPO</name>
<gene>
    <name evidence="1" type="primary">RPS0A</name>
    <name type="ORF">Kpol_1050p46</name>
</gene>
<comment type="function">
    <text evidence="1">Required for the assembly and/or stability of the 40S ribosomal subunit. Required for the processing of the 20S rRNA-precursor to mature 18S rRNA in a late step of the maturation of 40S ribosomal subunits.</text>
</comment>
<comment type="subunit">
    <text evidence="1">Component of the small ribosomal subunit. Mature ribosomes consist of a small (40S) and a large (60S) subunit. The 40S subunit contains about 33 different proteins and 1 molecule of RNA (18S). The 60S subunit contains about 49 different proteins and 3 molecules of RNA (25S, 5.8S and 5S). Interacts with RPS21.</text>
</comment>
<comment type="subcellular location">
    <subcellularLocation>
        <location evidence="1">Cytoplasm</location>
    </subcellularLocation>
</comment>
<comment type="similarity">
    <text evidence="1">Belongs to the universal ribosomal protein uS2 family.</text>
</comment>